<reference key="1">
    <citation type="submission" date="2006-08" db="EMBL/GenBank/DDBJ databases">
        <title>Complete sequence of chromosome 1 of Shewanella sp. MR-7.</title>
        <authorList>
            <person name="Copeland A."/>
            <person name="Lucas S."/>
            <person name="Lapidus A."/>
            <person name="Barry K."/>
            <person name="Detter J.C."/>
            <person name="Glavina del Rio T."/>
            <person name="Hammon N."/>
            <person name="Israni S."/>
            <person name="Dalin E."/>
            <person name="Tice H."/>
            <person name="Pitluck S."/>
            <person name="Kiss H."/>
            <person name="Brettin T."/>
            <person name="Bruce D."/>
            <person name="Han C."/>
            <person name="Tapia R."/>
            <person name="Gilna P."/>
            <person name="Schmutz J."/>
            <person name="Larimer F."/>
            <person name="Land M."/>
            <person name="Hauser L."/>
            <person name="Kyrpides N."/>
            <person name="Mikhailova N."/>
            <person name="Nealson K."/>
            <person name="Konstantinidis K."/>
            <person name="Klappenbach J."/>
            <person name="Tiedje J."/>
            <person name="Richardson P."/>
        </authorList>
    </citation>
    <scope>NUCLEOTIDE SEQUENCE [LARGE SCALE GENOMIC DNA]</scope>
    <source>
        <strain>MR-7</strain>
    </source>
</reference>
<evidence type="ECO:0000255" key="1">
    <source>
        <dbReference type="HAMAP-Rule" id="MF_01622"/>
    </source>
</evidence>
<proteinExistence type="inferred from homology"/>
<gene>
    <name evidence="1" type="primary">selU</name>
    <name type="ordered locus">Shewmr7_0169</name>
</gene>
<comment type="function">
    <text evidence="1">Involved in the post-transcriptional modification of the uridine at the wobble position (U34) of tRNA(Lys), tRNA(Glu) and tRNA(Gln). Catalyzes the conversion of 2-thiouridine (S2U-RNA) to 2-selenouridine (Se2U-RNA). Acts in a two-step process involving geranylation of 2-thiouridine (S2U) to S-geranyl-2-thiouridine (geS2U) and subsequent selenation of the latter derivative to 2-selenouridine (Se2U) in the tRNA chain.</text>
</comment>
<comment type="catalytic activity">
    <reaction evidence="1">
        <text>5-methylaminomethyl-2-thiouridine(34) in tRNA + selenophosphate + (2E)-geranyl diphosphate + H2O + H(+) = 5-methylaminomethyl-2-selenouridine(34) in tRNA + (2E)-thiogeraniol + phosphate + diphosphate</text>
        <dbReference type="Rhea" id="RHEA:42716"/>
        <dbReference type="Rhea" id="RHEA-COMP:10195"/>
        <dbReference type="Rhea" id="RHEA-COMP:10196"/>
        <dbReference type="ChEBI" id="CHEBI:15377"/>
        <dbReference type="ChEBI" id="CHEBI:15378"/>
        <dbReference type="ChEBI" id="CHEBI:16144"/>
        <dbReference type="ChEBI" id="CHEBI:33019"/>
        <dbReference type="ChEBI" id="CHEBI:43474"/>
        <dbReference type="ChEBI" id="CHEBI:58057"/>
        <dbReference type="ChEBI" id="CHEBI:74455"/>
        <dbReference type="ChEBI" id="CHEBI:82743"/>
        <dbReference type="ChEBI" id="CHEBI:143703"/>
        <dbReference type="EC" id="2.9.1.3"/>
    </reaction>
    <physiologicalReaction direction="left-to-right" evidence="1">
        <dbReference type="Rhea" id="RHEA:42717"/>
    </physiologicalReaction>
</comment>
<comment type="catalytic activity">
    <reaction evidence="1">
        <text>5-methylaminomethyl-2-thiouridine(34) in tRNA + (2E)-geranyl diphosphate = 5-methylaminomethyl-S-(2E)-geranyl-thiouridine(34) in tRNA + diphosphate</text>
        <dbReference type="Rhea" id="RHEA:14085"/>
        <dbReference type="Rhea" id="RHEA-COMP:10195"/>
        <dbReference type="Rhea" id="RHEA-COMP:14654"/>
        <dbReference type="ChEBI" id="CHEBI:33019"/>
        <dbReference type="ChEBI" id="CHEBI:58057"/>
        <dbReference type="ChEBI" id="CHEBI:74455"/>
        <dbReference type="ChEBI" id="CHEBI:140632"/>
    </reaction>
    <physiologicalReaction direction="left-to-right" evidence="1">
        <dbReference type="Rhea" id="RHEA:14086"/>
    </physiologicalReaction>
</comment>
<comment type="catalytic activity">
    <reaction evidence="1">
        <text>5-methylaminomethyl-S-(2E)-geranyl-thiouridine(34) in tRNA + selenophosphate + H(+) = 5-methylaminomethyl-2-(Se-phospho)selenouridine(34) in tRNA + (2E)-thiogeraniol</text>
        <dbReference type="Rhea" id="RHEA:60172"/>
        <dbReference type="Rhea" id="RHEA-COMP:14654"/>
        <dbReference type="Rhea" id="RHEA-COMP:15523"/>
        <dbReference type="ChEBI" id="CHEBI:15378"/>
        <dbReference type="ChEBI" id="CHEBI:16144"/>
        <dbReference type="ChEBI" id="CHEBI:140632"/>
        <dbReference type="ChEBI" id="CHEBI:143702"/>
        <dbReference type="ChEBI" id="CHEBI:143703"/>
    </reaction>
    <physiologicalReaction direction="left-to-right" evidence="1">
        <dbReference type="Rhea" id="RHEA:60173"/>
    </physiologicalReaction>
</comment>
<comment type="catalytic activity">
    <reaction evidence="1">
        <text>5-methylaminomethyl-2-(Se-phospho)selenouridine(34) in tRNA + H2O = 5-methylaminomethyl-2-selenouridine(34) in tRNA + phosphate</text>
        <dbReference type="Rhea" id="RHEA:60176"/>
        <dbReference type="Rhea" id="RHEA-COMP:10196"/>
        <dbReference type="Rhea" id="RHEA-COMP:15523"/>
        <dbReference type="ChEBI" id="CHEBI:15377"/>
        <dbReference type="ChEBI" id="CHEBI:43474"/>
        <dbReference type="ChEBI" id="CHEBI:82743"/>
        <dbReference type="ChEBI" id="CHEBI:143702"/>
    </reaction>
    <physiologicalReaction direction="left-to-right" evidence="1">
        <dbReference type="Rhea" id="RHEA:60177"/>
    </physiologicalReaction>
</comment>
<comment type="subunit">
    <text evidence="1">Monomer.</text>
</comment>
<comment type="similarity">
    <text evidence="1">Belongs to the SelU family.</text>
</comment>
<protein>
    <recommendedName>
        <fullName evidence="1">tRNA 2-selenouridine synthase</fullName>
        <ecNumber evidence="1">2.9.1.3</ecNumber>
    </recommendedName>
</protein>
<feature type="chain" id="PRO_0000292714" description="tRNA 2-selenouridine synthase">
    <location>
        <begin position="1"/>
        <end position="369"/>
    </location>
</feature>
<feature type="domain" description="Rhodanese" evidence="1">
    <location>
        <begin position="15"/>
        <end position="138"/>
    </location>
</feature>
<feature type="active site" description="S-selanylcysteine intermediate" evidence="1">
    <location>
        <position position="98"/>
    </location>
</feature>
<sequence length="369" mass="41936">MTTKLIPAQQYHDIFIAGQPLIDLRAPIEFDRGAFPSSVNLPLMVDKEREKVGTCYKEQGQQAAIALGHSLVHGVVKQQRIDAWLNFLSAHPQAYLYCFRGGLRSQLTQQWLQEAGVTVPYVQGGYKGMRQYLIGVIEAAPSLQPLLSLSGMTGSGKTDFLKRRKEAIDLEGIANHRGSSFGKNIDPQPTQINFENRLAIALLHHQLGNHACLLLEDESFLIGRSALPQSFYSAMQTADIVVLEEDDDIRLTRLLDEYVHKMHRGFIERLGLEAGFEAFSHYLLQSLGSIRKRLGGKQYQELQDIMQQALSQQLNQNQTSQHLAWISLLLHKYYDPMYEYQLQKKAGNILFRGSHQATHEWLDNYQSER</sequence>
<dbReference type="EC" id="2.9.1.3" evidence="1"/>
<dbReference type="EMBL" id="CP000444">
    <property type="protein sequence ID" value="ABI41175.1"/>
    <property type="molecule type" value="Genomic_DNA"/>
</dbReference>
<dbReference type="SMR" id="Q0I0D0"/>
<dbReference type="KEGG" id="shm:Shewmr7_0169"/>
<dbReference type="HOGENOM" id="CLU_043456_1_0_6"/>
<dbReference type="GO" id="GO:0016765">
    <property type="term" value="F:transferase activity, transferring alkyl or aryl (other than methyl) groups"/>
    <property type="evidence" value="ECO:0007669"/>
    <property type="project" value="UniProtKB-UniRule"/>
</dbReference>
<dbReference type="GO" id="GO:0043828">
    <property type="term" value="F:tRNA 2-selenouridine synthase activity"/>
    <property type="evidence" value="ECO:0007669"/>
    <property type="project" value="UniProtKB-EC"/>
</dbReference>
<dbReference type="GO" id="GO:0002098">
    <property type="term" value="P:tRNA wobble uridine modification"/>
    <property type="evidence" value="ECO:0007669"/>
    <property type="project" value="UniProtKB-UniRule"/>
</dbReference>
<dbReference type="FunFam" id="3.40.250.10:FF:000009">
    <property type="entry name" value="tRNA 2-selenouridine/geranyl-2-thiouridine synthase"/>
    <property type="match status" value="1"/>
</dbReference>
<dbReference type="Gene3D" id="3.40.250.10">
    <property type="entry name" value="Rhodanese-like domain"/>
    <property type="match status" value="1"/>
</dbReference>
<dbReference type="HAMAP" id="MF_01622">
    <property type="entry name" value="tRNA_sel_U_synth"/>
    <property type="match status" value="1"/>
</dbReference>
<dbReference type="InterPro" id="IPR001763">
    <property type="entry name" value="Rhodanese-like_dom"/>
</dbReference>
<dbReference type="InterPro" id="IPR036873">
    <property type="entry name" value="Rhodanese-like_dom_sf"/>
</dbReference>
<dbReference type="InterPro" id="IPR017582">
    <property type="entry name" value="SelU"/>
</dbReference>
<dbReference type="NCBIfam" id="NF008751">
    <property type="entry name" value="PRK11784.1-3"/>
    <property type="match status" value="1"/>
</dbReference>
<dbReference type="NCBIfam" id="TIGR03167">
    <property type="entry name" value="tRNA_sel_U_synt"/>
    <property type="match status" value="1"/>
</dbReference>
<dbReference type="PANTHER" id="PTHR30401">
    <property type="entry name" value="TRNA 2-SELENOURIDINE SYNTHASE"/>
    <property type="match status" value="1"/>
</dbReference>
<dbReference type="PANTHER" id="PTHR30401:SF0">
    <property type="entry name" value="TRNA 2-SELENOURIDINE SYNTHASE"/>
    <property type="match status" value="1"/>
</dbReference>
<dbReference type="Pfam" id="PF00581">
    <property type="entry name" value="Rhodanese"/>
    <property type="match status" value="1"/>
</dbReference>
<dbReference type="SMART" id="SM00450">
    <property type="entry name" value="RHOD"/>
    <property type="match status" value="1"/>
</dbReference>
<dbReference type="SUPFAM" id="SSF52821">
    <property type="entry name" value="Rhodanese/Cell cycle control phosphatase"/>
    <property type="match status" value="1"/>
</dbReference>
<dbReference type="PROSITE" id="PS50206">
    <property type="entry name" value="RHODANESE_3"/>
    <property type="match status" value="1"/>
</dbReference>
<accession>Q0I0D0</accession>
<name>SELU_SHESR</name>
<keyword id="KW-0711">Selenium</keyword>
<keyword id="KW-0808">Transferase</keyword>
<organism>
    <name type="scientific">Shewanella sp. (strain MR-7)</name>
    <dbReference type="NCBI Taxonomy" id="60481"/>
    <lineage>
        <taxon>Bacteria</taxon>
        <taxon>Pseudomonadati</taxon>
        <taxon>Pseudomonadota</taxon>
        <taxon>Gammaproteobacteria</taxon>
        <taxon>Alteromonadales</taxon>
        <taxon>Shewanellaceae</taxon>
        <taxon>Shewanella</taxon>
    </lineage>
</organism>